<feature type="chain" id="PRO_0000191583" description="Sperm protamine P1">
    <location>
        <begin position="1"/>
        <end position="51"/>
    </location>
</feature>
<sequence>MARYRCCRSQSRSRCCRPRRRCRRRRRRSCRARRRATRCCRRRYRLRSRRY</sequence>
<protein>
    <recommendedName>
        <fullName>Sperm protamine P1</fullName>
    </recommendedName>
</protein>
<reference key="1">
    <citation type="submission" date="1998-10" db="EMBL/GenBank/DDBJ databases">
        <title>Positive Darwinian selection on the lineage leading to humans.</title>
        <authorList>
            <person name="Karanth P.K."/>
            <person name="Stewart C.-B."/>
            <person name="Holt R.A."/>
            <person name="de Koning J."/>
            <person name="Messier W."/>
        </authorList>
    </citation>
    <scope>NUCLEOTIDE SEQUENCE [GENOMIC DNA]</scope>
</reference>
<dbReference type="EMBL" id="AF119238">
    <property type="protein sequence ID" value="AAG42162.1"/>
    <property type="molecule type" value="Genomic_DNA"/>
</dbReference>
<dbReference type="GO" id="GO:0000786">
    <property type="term" value="C:nucleosome"/>
    <property type="evidence" value="ECO:0007669"/>
    <property type="project" value="UniProtKB-KW"/>
</dbReference>
<dbReference type="GO" id="GO:0005634">
    <property type="term" value="C:nucleus"/>
    <property type="evidence" value="ECO:0007669"/>
    <property type="project" value="UniProtKB-SubCell"/>
</dbReference>
<dbReference type="GO" id="GO:0003677">
    <property type="term" value="F:DNA binding"/>
    <property type="evidence" value="ECO:0007669"/>
    <property type="project" value="UniProtKB-KW"/>
</dbReference>
<dbReference type="GO" id="GO:0030261">
    <property type="term" value="P:chromosome condensation"/>
    <property type="evidence" value="ECO:0007669"/>
    <property type="project" value="UniProtKB-KW"/>
</dbReference>
<dbReference type="GO" id="GO:0035092">
    <property type="term" value="P:sperm DNA condensation"/>
    <property type="evidence" value="ECO:0007669"/>
    <property type="project" value="InterPro"/>
</dbReference>
<dbReference type="InterPro" id="IPR000221">
    <property type="entry name" value="Protamine_P1"/>
</dbReference>
<dbReference type="Pfam" id="PF00260">
    <property type="entry name" value="Protamine_P1"/>
    <property type="match status" value="1"/>
</dbReference>
<dbReference type="PROSITE" id="PS00048">
    <property type="entry name" value="PROTAMINE_P1"/>
    <property type="match status" value="1"/>
</dbReference>
<proteinExistence type="evidence at transcript level"/>
<comment type="function">
    <text evidence="1">Protamines substitute for histones in the chromatin of sperm during the haploid phase of spermatogenesis. They compact sperm DNA into a highly condensed, stable and inactive complex (By similarity).</text>
</comment>
<comment type="subcellular location">
    <subcellularLocation>
        <location evidence="1">Nucleus</location>
    </subcellularLocation>
    <subcellularLocation>
        <location evidence="1">Chromosome</location>
    </subcellularLocation>
</comment>
<comment type="tissue specificity">
    <text>Testis.</text>
</comment>
<comment type="similarity">
    <text evidence="2">Belongs to the protamine P1 family.</text>
</comment>
<keyword id="KW-0158">Chromosome</keyword>
<keyword id="KW-0217">Developmental protein</keyword>
<keyword id="KW-0221">Differentiation</keyword>
<keyword id="KW-0226">DNA condensation</keyword>
<keyword id="KW-0238">DNA-binding</keyword>
<keyword id="KW-0544">Nucleosome core</keyword>
<keyword id="KW-0539">Nucleus</keyword>
<keyword id="KW-0744">Spermatogenesis</keyword>
<evidence type="ECO:0000250" key="1"/>
<evidence type="ECO:0000305" key="2"/>
<organism>
    <name type="scientific">Trachypithecus obscurus</name>
    <name type="common">Dusky leaf-monkey</name>
    <name type="synonym">Presbytis obscura</name>
    <dbReference type="NCBI Taxonomy" id="54181"/>
    <lineage>
        <taxon>Eukaryota</taxon>
        <taxon>Metazoa</taxon>
        <taxon>Chordata</taxon>
        <taxon>Craniata</taxon>
        <taxon>Vertebrata</taxon>
        <taxon>Euteleostomi</taxon>
        <taxon>Mammalia</taxon>
        <taxon>Eutheria</taxon>
        <taxon>Euarchontoglires</taxon>
        <taxon>Primates</taxon>
        <taxon>Haplorrhini</taxon>
        <taxon>Catarrhini</taxon>
        <taxon>Cercopithecidae</taxon>
        <taxon>Colobinae</taxon>
        <taxon>Trachypithecus</taxon>
    </lineage>
</organism>
<name>HSP1_TRAOB</name>
<accession>Q7JIX9</accession>
<gene>
    <name type="primary">PRM1</name>
</gene>